<reference key="1">
    <citation type="submission" date="1998-07" db="EMBL/GenBank/DDBJ databases">
        <title>Isolation of the full-length cDNA for beta-actin from the common brushtail possum.</title>
        <authorList>
            <person name="Wedlock D.N."/>
            <person name="Hickson R."/>
            <person name="Buddle B.M."/>
        </authorList>
    </citation>
    <scope>NUCLEOTIDE SEQUENCE [MRNA]</scope>
</reference>
<feature type="chain" id="PRO_0000000787" description="Actin, cytoplasmic 1">
    <location>
        <begin position="1"/>
        <end position="375"/>
    </location>
</feature>
<feature type="initiator methionine" description="Removed; alternate" evidence="2">
    <location>
        <position position="1"/>
    </location>
</feature>
<feature type="chain" id="PRO_0000367085" description="Actin, cytoplasmic 1, N-terminally processed">
    <location>
        <begin position="2"/>
        <end position="375"/>
    </location>
</feature>
<feature type="modified residue" description="N-acetylmethionine" evidence="2">
    <location>
        <position position="1"/>
    </location>
</feature>
<feature type="modified residue" description="N-acetylaspartate; in Actin, cytoplasmic 1, N-terminally processed" evidence="2">
    <location>
        <position position="2"/>
    </location>
</feature>
<feature type="modified residue" description="Methionine (R)-sulfoxide" evidence="3">
    <location>
        <position position="44"/>
    </location>
</feature>
<feature type="modified residue" description="Methionine (R)-sulfoxide" evidence="3">
    <location>
        <position position="47"/>
    </location>
</feature>
<feature type="modified residue" description="Tele-methylhistidine" evidence="3">
    <location>
        <position position="73"/>
    </location>
</feature>
<feature type="modified residue" description="N6-methyllysine" evidence="2">
    <location>
        <position position="84"/>
    </location>
</feature>
<gene>
    <name type="primary">ACTB</name>
</gene>
<proteinExistence type="evidence at transcript level"/>
<sequence length="375" mass="41737">MDDDIAALVVDNGSGMCKAGFAGDDAPRAVFPSIVGRPRHQGVMVGMGQKDSYVGDEAQSKRGILTLKYPIEHGIVTNWDDMEKIWHHTFYNELRVAPEEHPVLLTEAPLNPKANREKMTQIMFETFNTPAMYVAIQAVLSLYASGRTTGIVMDSGDGVTHTVPIYEGYALPHAILRLDLAGRDLTDYLMKILTERGYSFTTTAEREIVRDIKEKLCYVALDFEQEMATAASSSSLEKSYELPDGQVITIGNERFRCPEALFQPSFLGMESCGIHETTFNSIMKCDVDIRKDLYANTVLSGGTTMYPGIADRMQKEITALAPSTMKIKIIAPPERKYSVWIGGSILASLSTFQQMWISKQEYDESGPSIVHRKCF</sequence>
<comment type="function">
    <text evidence="2 5">Actin is a highly conserved protein that polymerizes to produce filaments that form cross-linked networks in the cytoplasm of cells (By similarity). Actin exists in both monomeric (G-actin) and polymeric (F-actin) forms, both forms playing key functions, such as cell motility and contraction (By similarity). In addition to their role in the cytoplasmic cytoskeleton, G- and F-actin also localize in the nucleus, and regulate gene transcription and motility and repair of damaged DNA (By similarity). Plays a role in the assembly of the gamma-tubulin ring complex (gTuRC), which regulates the minus-end nucleation of alpha-beta tubulin heterodimers that grow into microtubule protafilaments (By similarity). Part of the ACTR1A/ACTB filament around which the dynactin complex is built (By similarity). The dynactin multiprotein complex activates the molecular motor dynein for ultra-processive transport along microtubules (By similarity).</text>
</comment>
<comment type="catalytic activity">
    <reaction evidence="4">
        <text>ATP + H2O = ADP + phosphate + H(+)</text>
        <dbReference type="Rhea" id="RHEA:13065"/>
        <dbReference type="ChEBI" id="CHEBI:15377"/>
        <dbReference type="ChEBI" id="CHEBI:15378"/>
        <dbReference type="ChEBI" id="CHEBI:30616"/>
        <dbReference type="ChEBI" id="CHEBI:43474"/>
        <dbReference type="ChEBI" id="CHEBI:456216"/>
    </reaction>
</comment>
<comment type="subunit">
    <text evidence="1 2 3 5">Polymerization of globular actin (G-actin) leads to a structural filament (F-actin) in the form of a two-stranded helix (By similarity). Each actin can bind to 4 others (By similarity). Identified in a IGF2BP1-dependent mRNP granule complex containing untranslated mRNAs (By similarity). Component of the BAF complex, which includes at least actin (ACTB), ARID1A, ARID1B/BAF250, SMARCA2, SMARCA4/BRG1, ACTL6A/BAF53, ACTL6B/BAF53B, SMARCE1/BAF57 SMARCC1/BAF155, SMARCC2/BAF170, SMARCB1/SNF5/INI1, and one or more of SMARCD1/BAF60A, SMARCD2/BAF60B, or SMARCD3/BAF60C (By similarity). In muscle cells, the BAF complex also contains DPF3 (By similarity). Found in a complex with XPO6, Ran, ACTB and PFN1 (By similarity). Interacts with PFN1 (By similarity). Interacts with XPO6 and EMD (By similarity). Interacts with ERBB2 (By similarity). Interacts with GCSAM (By similarity). Interacts with TBC1D21 (By similarity). Interacts with CPNE1 (via VWFA domain) and CPNE4 (via VWFA domain) (By similarity). Interacts with DHX9 (via C-terminus); this interaction is direct and mediates the attachment to nuclear ribonucleoprotein complexes (By similarity). Interacts with FAM107A (By similarity). Associates with the gamma-tubulin ring complex (gTuRC) consisting of TUBGCP2, TUBGCP3, TUBGCP4, TUBGCP5 and TUBGCP6 and gamma-tubulin TUBG1 or TUBG2; within the complex, interacts with TUBGCP3 and TUBGCP6 to form a luminal bridge with MZT1 that stabilizes the initial structure during complex assembly (By similarity). Part of the ACTR1A/ACTB filament around which the dynactin complex is built (By similarity). The filament contains 8 copies of ACTR1A and 1 ACTB (By similarity). Interacts with TPRN which forms ring-like structures in the stereocilium taper region; the interaction may stabilize stereocilia in inner ear hair cells (By similarity). Interacts with AMOTL2 (via N-terminus), the interaction facilitates binding of cell junction complexes to actin fibers in endothelial cells (By similarity).</text>
</comment>
<comment type="subcellular location">
    <subcellularLocation>
        <location evidence="2">Cytoplasm</location>
        <location evidence="2">Cytoskeleton</location>
    </subcellularLocation>
    <subcellularLocation>
        <location evidence="2">Nucleus</location>
    </subcellularLocation>
    <text evidence="2">Localized in cytoplasmic mRNP granules containing untranslated mRNAs.</text>
</comment>
<comment type="PTM">
    <molecule>Actin, cytoplasmic 1</molecule>
    <text evidence="2">N-terminal cleavage of acetylated methionine of immature cytoplasmic actin by ACTMAP.</text>
</comment>
<comment type="PTM">
    <text evidence="2">ISGylated.</text>
</comment>
<comment type="PTM">
    <text evidence="3">Oxidation of Met-44 and Met-47 by MICALs (MICAL1, MICAL2 or MICAL3) to form methionine sulfoxide promotes actin filament depolymerization. MICAL1 and MICAL2 produce the (R)-S-oxide form. The (R)-S-oxide form is reverted by MSRB1 and MSRB2, which promote actin repolymerization.</text>
</comment>
<comment type="PTM">
    <text evidence="2">Monomethylation at Lys-84 (K84me1) regulates actin-myosin interaction and actomyosin-dependent processes. Demethylation by ALKBH4 is required for maintaining actomyosin dynamics supporting normal cleavage furrow ingression during cytokinesis and cell migration.</text>
</comment>
<comment type="PTM">
    <molecule>Actin, cytoplasmic 1, N-terminally processed</molecule>
    <text evidence="2">N-terminal acetylation by NAA80 affects actin filament depolymerization and elongation, including elongation driven by formins. In contrast, filament nucleation by the Arp2/3 complex is not affected.</text>
</comment>
<comment type="PTM">
    <text evidence="2 3">Methylated at His-73 by SETD3 (By similarity). Methylation at His-73 is required for smooth muscle contraction of the laboring uterus during delivery (By similarity).</text>
</comment>
<comment type="miscellaneous">
    <text evidence="2">In vertebrates 3 main groups of actin isoforms, alpha, beta and gamma have been identified. The alpha actins are found in muscle tissues and are a major constituent of the contractile apparatus. The beta and gamma actins coexist in most cell types as components of the cytoskeleton and as mediators of internal cell motility.</text>
</comment>
<comment type="similarity">
    <text evidence="6">Belongs to the actin family.</text>
</comment>
<name>ACTB_TRIVU</name>
<protein>
    <recommendedName>
        <fullName>Actin, cytoplasmic 1</fullName>
        <ecNumber evidence="4">3.6.4.-</ecNumber>
    </recommendedName>
    <alternativeName>
        <fullName>Beta-actin</fullName>
    </alternativeName>
    <component>
        <recommendedName>
            <fullName>Actin, cytoplasmic 1, N-terminally processed</fullName>
        </recommendedName>
    </component>
</protein>
<organism>
    <name type="scientific">Trichosurus vulpecula</name>
    <name type="common">Brush-tailed possum</name>
    <dbReference type="NCBI Taxonomy" id="9337"/>
    <lineage>
        <taxon>Eukaryota</taxon>
        <taxon>Metazoa</taxon>
        <taxon>Chordata</taxon>
        <taxon>Craniata</taxon>
        <taxon>Vertebrata</taxon>
        <taxon>Euteleostomi</taxon>
        <taxon>Mammalia</taxon>
        <taxon>Metatheria</taxon>
        <taxon>Diprotodontia</taxon>
        <taxon>Phalangeridae</taxon>
        <taxon>Trichosurus</taxon>
    </lineage>
</organism>
<keyword id="KW-0007">Acetylation</keyword>
<keyword id="KW-0067">ATP-binding</keyword>
<keyword id="KW-0963">Cytoplasm</keyword>
<keyword id="KW-0206">Cytoskeleton</keyword>
<keyword id="KW-0378">Hydrolase</keyword>
<keyword id="KW-0488">Methylation</keyword>
<keyword id="KW-0547">Nucleotide-binding</keyword>
<keyword id="KW-0539">Nucleus</keyword>
<keyword id="KW-0558">Oxidation</keyword>
<keyword id="KW-0832">Ubl conjugation</keyword>
<evidence type="ECO:0000250" key="1">
    <source>
        <dbReference type="UniProtKB" id="O18840"/>
    </source>
</evidence>
<evidence type="ECO:0000250" key="2">
    <source>
        <dbReference type="UniProtKB" id="P60709"/>
    </source>
</evidence>
<evidence type="ECO:0000250" key="3">
    <source>
        <dbReference type="UniProtKB" id="P60710"/>
    </source>
</evidence>
<evidence type="ECO:0000250" key="4">
    <source>
        <dbReference type="UniProtKB" id="P68137"/>
    </source>
</evidence>
<evidence type="ECO:0000250" key="5">
    <source>
        <dbReference type="UniProtKB" id="Q6QAQ1"/>
    </source>
</evidence>
<evidence type="ECO:0000305" key="6"/>
<accession>P60707</accession>
<accession>P02570</accession>
<accession>P70514</accession>
<accession>P99021</accession>
<accession>Q11211</accession>
<accession>Q64316</accession>
<dbReference type="EC" id="3.6.4.-" evidence="4"/>
<dbReference type="EMBL" id="AF076190">
    <property type="protein sequence ID" value="AAC26519.1"/>
    <property type="molecule type" value="mRNA"/>
</dbReference>
<dbReference type="RefSeq" id="XP_036597107.1">
    <property type="nucleotide sequence ID" value="XM_036741212.1"/>
</dbReference>
<dbReference type="SMR" id="P60707"/>
<dbReference type="GeneID" id="118833809"/>
<dbReference type="OrthoDB" id="9434244at2759"/>
<dbReference type="GO" id="GO:0015629">
    <property type="term" value="C:actin cytoskeleton"/>
    <property type="evidence" value="ECO:0000250"/>
    <property type="project" value="UniProtKB"/>
</dbReference>
<dbReference type="GO" id="GO:0005856">
    <property type="term" value="C:cytoskeleton"/>
    <property type="evidence" value="ECO:0000250"/>
    <property type="project" value="AgBase"/>
</dbReference>
<dbReference type="GO" id="GO:0097433">
    <property type="term" value="C:dense body"/>
    <property type="evidence" value="ECO:0000250"/>
    <property type="project" value="AgBase"/>
</dbReference>
<dbReference type="GO" id="GO:0005925">
    <property type="term" value="C:focal adhesion"/>
    <property type="evidence" value="ECO:0000250"/>
    <property type="project" value="AgBase"/>
</dbReference>
<dbReference type="GO" id="GO:0005634">
    <property type="term" value="C:nucleus"/>
    <property type="evidence" value="ECO:0000250"/>
    <property type="project" value="UniProtKB"/>
</dbReference>
<dbReference type="GO" id="GO:0005886">
    <property type="term" value="C:plasma membrane"/>
    <property type="evidence" value="ECO:0000250"/>
    <property type="project" value="AgBase"/>
</dbReference>
<dbReference type="GO" id="GO:0032991">
    <property type="term" value="C:protein-containing complex"/>
    <property type="evidence" value="ECO:0000250"/>
    <property type="project" value="UniProtKB"/>
</dbReference>
<dbReference type="GO" id="GO:0005524">
    <property type="term" value="F:ATP binding"/>
    <property type="evidence" value="ECO:0007669"/>
    <property type="project" value="UniProtKB-KW"/>
</dbReference>
<dbReference type="GO" id="GO:0016787">
    <property type="term" value="F:hydrolase activity"/>
    <property type="evidence" value="ECO:0007669"/>
    <property type="project" value="UniProtKB-KW"/>
</dbReference>
<dbReference type="CDD" id="cd10224">
    <property type="entry name" value="ASKHA_NBD_actin"/>
    <property type="match status" value="1"/>
</dbReference>
<dbReference type="FunFam" id="3.30.420.40:FF:000131">
    <property type="entry name" value="Actin, alpha skeletal muscle"/>
    <property type="match status" value="1"/>
</dbReference>
<dbReference type="FunFam" id="3.30.420.40:FF:000291">
    <property type="entry name" value="Actin, alpha skeletal muscle"/>
    <property type="match status" value="1"/>
</dbReference>
<dbReference type="FunFam" id="3.90.640.10:FF:000047">
    <property type="entry name" value="Actin, alpha skeletal muscle"/>
    <property type="match status" value="1"/>
</dbReference>
<dbReference type="FunFam" id="3.30.420.40:FF:000058">
    <property type="entry name" value="Putative actin-related protein 5"/>
    <property type="match status" value="1"/>
</dbReference>
<dbReference type="Gene3D" id="3.30.420.40">
    <property type="match status" value="2"/>
</dbReference>
<dbReference type="Gene3D" id="3.90.640.10">
    <property type="entry name" value="Actin, Chain A, domain 4"/>
    <property type="match status" value="1"/>
</dbReference>
<dbReference type="InterPro" id="IPR004000">
    <property type="entry name" value="Actin"/>
</dbReference>
<dbReference type="InterPro" id="IPR020902">
    <property type="entry name" value="Actin/actin-like_CS"/>
</dbReference>
<dbReference type="InterPro" id="IPR004001">
    <property type="entry name" value="Actin_CS"/>
</dbReference>
<dbReference type="InterPro" id="IPR043129">
    <property type="entry name" value="ATPase_NBD"/>
</dbReference>
<dbReference type="PANTHER" id="PTHR11937">
    <property type="entry name" value="ACTIN"/>
    <property type="match status" value="1"/>
</dbReference>
<dbReference type="Pfam" id="PF00022">
    <property type="entry name" value="Actin"/>
    <property type="match status" value="1"/>
</dbReference>
<dbReference type="PRINTS" id="PR00190">
    <property type="entry name" value="ACTIN"/>
</dbReference>
<dbReference type="SMART" id="SM00268">
    <property type="entry name" value="ACTIN"/>
    <property type="match status" value="1"/>
</dbReference>
<dbReference type="SUPFAM" id="SSF53067">
    <property type="entry name" value="Actin-like ATPase domain"/>
    <property type="match status" value="2"/>
</dbReference>
<dbReference type="PROSITE" id="PS00406">
    <property type="entry name" value="ACTINS_1"/>
    <property type="match status" value="1"/>
</dbReference>
<dbReference type="PROSITE" id="PS00432">
    <property type="entry name" value="ACTINS_2"/>
    <property type="match status" value="1"/>
</dbReference>
<dbReference type="PROSITE" id="PS01132">
    <property type="entry name" value="ACTINS_ACT_LIKE"/>
    <property type="match status" value="1"/>
</dbReference>